<reference key="1">
    <citation type="journal article" date="2008" name="BMC Genomics">
        <title>Genomics of an extreme psychrophile, Psychromonas ingrahamii.</title>
        <authorList>
            <person name="Riley M."/>
            <person name="Staley J.T."/>
            <person name="Danchin A."/>
            <person name="Wang T.Z."/>
            <person name="Brettin T.S."/>
            <person name="Hauser L.J."/>
            <person name="Land M.L."/>
            <person name="Thompson L.S."/>
        </authorList>
    </citation>
    <scope>NUCLEOTIDE SEQUENCE [LARGE SCALE GENOMIC DNA]</scope>
    <source>
        <strain>DSM 17664 / CCUG 51855 / 37</strain>
    </source>
</reference>
<sequence length="319" mass="33841">MNSKIIGTGGYLPVTVRSNDDLEKMVDTSDEWITTRTGIKERRIANQQETIAFMGKEAALQALEAANLTAEDLDLIIVGTTSNHNAFPSAACEIQNLLGIYDIPAFDISAACAGFTYALSAADNFIKAGSAKKVLVIGADTLAATCDSTDRSTIILFGDGAGAVVISATEDEGILSTHINADGRFGELLKLPNPQRGNAQTVHEAYLSMSGNDVFKVAVKKLSQVVVDTLAANNIEKEQLDWLVPHQANKRIITATAKKLGMSMDQVILTLENQGNTSAASVPLALDEGVRSGKIKPGQLILLEAFGGGFTWGSALVRM</sequence>
<organism>
    <name type="scientific">Psychromonas ingrahamii (strain DSM 17664 / CCUG 51855 / 37)</name>
    <dbReference type="NCBI Taxonomy" id="357804"/>
    <lineage>
        <taxon>Bacteria</taxon>
        <taxon>Pseudomonadati</taxon>
        <taxon>Pseudomonadota</taxon>
        <taxon>Gammaproteobacteria</taxon>
        <taxon>Alteromonadales</taxon>
        <taxon>Psychromonadaceae</taxon>
        <taxon>Psychromonas</taxon>
    </lineage>
</organism>
<protein>
    <recommendedName>
        <fullName evidence="1">Beta-ketoacyl-[acyl-carrier-protein] synthase III</fullName>
        <shortName evidence="1">Beta-ketoacyl-ACP synthase III</shortName>
        <shortName evidence="1">KAS III</shortName>
        <ecNumber evidence="1">2.3.1.180</ecNumber>
    </recommendedName>
    <alternativeName>
        <fullName evidence="1">3-oxoacyl-[acyl-carrier-protein] synthase 3</fullName>
    </alternativeName>
    <alternativeName>
        <fullName evidence="1">3-oxoacyl-[acyl-carrier-protein] synthase III</fullName>
    </alternativeName>
</protein>
<evidence type="ECO:0000255" key="1">
    <source>
        <dbReference type="HAMAP-Rule" id="MF_01815"/>
    </source>
</evidence>
<feature type="chain" id="PRO_1000056394" description="Beta-ketoacyl-[acyl-carrier-protein] synthase III">
    <location>
        <begin position="1"/>
        <end position="319"/>
    </location>
</feature>
<feature type="region of interest" description="ACP-binding" evidence="1">
    <location>
        <begin position="247"/>
        <end position="251"/>
    </location>
</feature>
<feature type="active site" evidence="1">
    <location>
        <position position="112"/>
    </location>
</feature>
<feature type="active site" evidence="1">
    <location>
        <position position="246"/>
    </location>
</feature>
<feature type="active site" evidence="1">
    <location>
        <position position="276"/>
    </location>
</feature>
<name>FABH_PSYIN</name>
<proteinExistence type="inferred from homology"/>
<keyword id="KW-0012">Acyltransferase</keyword>
<keyword id="KW-0963">Cytoplasm</keyword>
<keyword id="KW-0275">Fatty acid biosynthesis</keyword>
<keyword id="KW-0276">Fatty acid metabolism</keyword>
<keyword id="KW-0444">Lipid biosynthesis</keyword>
<keyword id="KW-0443">Lipid metabolism</keyword>
<keyword id="KW-0511">Multifunctional enzyme</keyword>
<keyword id="KW-1185">Reference proteome</keyword>
<keyword id="KW-0808">Transferase</keyword>
<comment type="function">
    <text evidence="1">Catalyzes the condensation reaction of fatty acid synthesis by the addition to an acyl acceptor of two carbons from malonyl-ACP. Catalyzes the first condensation reaction which initiates fatty acid synthesis and may therefore play a role in governing the total rate of fatty acid production. Possesses both acetoacetyl-ACP synthase and acetyl transacylase activities. Its substrate specificity determines the biosynthesis of branched-chain and/or straight-chain of fatty acids.</text>
</comment>
<comment type="catalytic activity">
    <reaction evidence="1">
        <text>malonyl-[ACP] + acetyl-CoA + H(+) = 3-oxobutanoyl-[ACP] + CO2 + CoA</text>
        <dbReference type="Rhea" id="RHEA:12080"/>
        <dbReference type="Rhea" id="RHEA-COMP:9623"/>
        <dbReference type="Rhea" id="RHEA-COMP:9625"/>
        <dbReference type="ChEBI" id="CHEBI:15378"/>
        <dbReference type="ChEBI" id="CHEBI:16526"/>
        <dbReference type="ChEBI" id="CHEBI:57287"/>
        <dbReference type="ChEBI" id="CHEBI:57288"/>
        <dbReference type="ChEBI" id="CHEBI:78449"/>
        <dbReference type="ChEBI" id="CHEBI:78450"/>
        <dbReference type="EC" id="2.3.1.180"/>
    </reaction>
</comment>
<comment type="pathway">
    <text evidence="1">Lipid metabolism; fatty acid biosynthesis.</text>
</comment>
<comment type="subunit">
    <text evidence="1">Homodimer.</text>
</comment>
<comment type="subcellular location">
    <subcellularLocation>
        <location evidence="1">Cytoplasm</location>
    </subcellularLocation>
</comment>
<comment type="domain">
    <text evidence="1">The last Arg residue of the ACP-binding site is essential for the weak association between ACP/AcpP and FabH.</text>
</comment>
<comment type="similarity">
    <text evidence="1">Belongs to the thiolase-like superfamily. FabH family.</text>
</comment>
<accession>A1STW1</accession>
<dbReference type="EC" id="2.3.1.180" evidence="1"/>
<dbReference type="EMBL" id="CP000510">
    <property type="protein sequence ID" value="ABM02926.1"/>
    <property type="molecule type" value="Genomic_DNA"/>
</dbReference>
<dbReference type="RefSeq" id="WP_011769489.1">
    <property type="nucleotide sequence ID" value="NC_008709.1"/>
</dbReference>
<dbReference type="SMR" id="A1STW1"/>
<dbReference type="STRING" id="357804.Ping_1087"/>
<dbReference type="KEGG" id="pin:Ping_1087"/>
<dbReference type="eggNOG" id="COG0332">
    <property type="taxonomic scope" value="Bacteria"/>
</dbReference>
<dbReference type="HOGENOM" id="CLU_039592_4_1_6"/>
<dbReference type="OrthoDB" id="9815506at2"/>
<dbReference type="UniPathway" id="UPA00094"/>
<dbReference type="Proteomes" id="UP000000639">
    <property type="component" value="Chromosome"/>
</dbReference>
<dbReference type="GO" id="GO:0005737">
    <property type="term" value="C:cytoplasm"/>
    <property type="evidence" value="ECO:0007669"/>
    <property type="project" value="UniProtKB-SubCell"/>
</dbReference>
<dbReference type="GO" id="GO:0004315">
    <property type="term" value="F:3-oxoacyl-[acyl-carrier-protein] synthase activity"/>
    <property type="evidence" value="ECO:0007669"/>
    <property type="project" value="InterPro"/>
</dbReference>
<dbReference type="GO" id="GO:0033818">
    <property type="term" value="F:beta-ketoacyl-acyl-carrier-protein synthase III activity"/>
    <property type="evidence" value="ECO:0007669"/>
    <property type="project" value="UniProtKB-UniRule"/>
</dbReference>
<dbReference type="GO" id="GO:0006633">
    <property type="term" value="P:fatty acid biosynthetic process"/>
    <property type="evidence" value="ECO:0007669"/>
    <property type="project" value="UniProtKB-UniRule"/>
</dbReference>
<dbReference type="CDD" id="cd00830">
    <property type="entry name" value="KAS_III"/>
    <property type="match status" value="1"/>
</dbReference>
<dbReference type="FunFam" id="3.40.47.10:FF:000004">
    <property type="entry name" value="3-oxoacyl-[acyl-carrier-protein] synthase 3"/>
    <property type="match status" value="1"/>
</dbReference>
<dbReference type="Gene3D" id="3.40.47.10">
    <property type="match status" value="1"/>
</dbReference>
<dbReference type="HAMAP" id="MF_01815">
    <property type="entry name" value="FabH"/>
    <property type="match status" value="1"/>
</dbReference>
<dbReference type="InterPro" id="IPR013747">
    <property type="entry name" value="ACP_syn_III_C"/>
</dbReference>
<dbReference type="InterPro" id="IPR013751">
    <property type="entry name" value="ACP_syn_III_N"/>
</dbReference>
<dbReference type="InterPro" id="IPR004655">
    <property type="entry name" value="FabH"/>
</dbReference>
<dbReference type="InterPro" id="IPR016039">
    <property type="entry name" value="Thiolase-like"/>
</dbReference>
<dbReference type="NCBIfam" id="TIGR00747">
    <property type="entry name" value="fabH"/>
    <property type="match status" value="1"/>
</dbReference>
<dbReference type="NCBIfam" id="NF006829">
    <property type="entry name" value="PRK09352.1"/>
    <property type="match status" value="1"/>
</dbReference>
<dbReference type="PANTHER" id="PTHR43091">
    <property type="entry name" value="3-OXOACYL-[ACYL-CARRIER-PROTEIN] SYNTHASE"/>
    <property type="match status" value="1"/>
</dbReference>
<dbReference type="PANTHER" id="PTHR43091:SF1">
    <property type="entry name" value="BETA-KETOACYL-[ACYL-CARRIER-PROTEIN] SYNTHASE III, CHLOROPLASTIC"/>
    <property type="match status" value="1"/>
</dbReference>
<dbReference type="Pfam" id="PF08545">
    <property type="entry name" value="ACP_syn_III"/>
    <property type="match status" value="1"/>
</dbReference>
<dbReference type="Pfam" id="PF08541">
    <property type="entry name" value="ACP_syn_III_C"/>
    <property type="match status" value="1"/>
</dbReference>
<dbReference type="SUPFAM" id="SSF53901">
    <property type="entry name" value="Thiolase-like"/>
    <property type="match status" value="1"/>
</dbReference>
<gene>
    <name evidence="1" type="primary">fabH</name>
    <name type="ordered locus">Ping_1087</name>
</gene>